<dbReference type="EMBL" id="AP008934">
    <property type="protein sequence ID" value="BAE18455.1"/>
    <property type="molecule type" value="Genomic_DNA"/>
</dbReference>
<dbReference type="RefSeq" id="WP_011303095.1">
    <property type="nucleotide sequence ID" value="NZ_MTGA01000038.1"/>
</dbReference>
<dbReference type="SMR" id="Q49XP0"/>
<dbReference type="GeneID" id="3616550"/>
<dbReference type="KEGG" id="ssp:SSP1310"/>
<dbReference type="PATRIC" id="fig|342451.11.peg.1312"/>
<dbReference type="eggNOG" id="COG1413">
    <property type="taxonomic scope" value="Bacteria"/>
</dbReference>
<dbReference type="HOGENOM" id="CLU_733295_0_0_9"/>
<dbReference type="OrthoDB" id="420201at2"/>
<dbReference type="Proteomes" id="UP000006371">
    <property type="component" value="Chromosome"/>
</dbReference>
<dbReference type="GO" id="GO:0016491">
    <property type="term" value="F:oxidoreductase activity"/>
    <property type="evidence" value="ECO:0007669"/>
    <property type="project" value="TreeGrafter"/>
</dbReference>
<dbReference type="Gene3D" id="1.25.10.10">
    <property type="entry name" value="Leucine-rich Repeat Variant"/>
    <property type="match status" value="1"/>
</dbReference>
<dbReference type="Gene3D" id="3.30.1370.70">
    <property type="entry name" value="Scaffold protein Nfu/NifU, N-terminal domain"/>
    <property type="match status" value="1"/>
</dbReference>
<dbReference type="InterPro" id="IPR011989">
    <property type="entry name" value="ARM-like"/>
</dbReference>
<dbReference type="InterPro" id="IPR016024">
    <property type="entry name" value="ARM-type_fold"/>
</dbReference>
<dbReference type="InterPro" id="IPR014824">
    <property type="entry name" value="Nfu/NifU_N"/>
</dbReference>
<dbReference type="InterPro" id="IPR036498">
    <property type="entry name" value="Nfu/NifU_N_sf"/>
</dbReference>
<dbReference type="InterPro" id="IPR004155">
    <property type="entry name" value="PBS_lyase_HEAT"/>
</dbReference>
<dbReference type="InterPro" id="IPR025989">
    <property type="entry name" value="Virulence_F_dom"/>
</dbReference>
<dbReference type="PANTHER" id="PTHR12697:SF37">
    <property type="entry name" value="CONSERVED VIRULENCE FACTOR C"/>
    <property type="match status" value="1"/>
</dbReference>
<dbReference type="PANTHER" id="PTHR12697">
    <property type="entry name" value="PBS LYASE HEAT-LIKE PROTEIN"/>
    <property type="match status" value="1"/>
</dbReference>
<dbReference type="Pfam" id="PF13646">
    <property type="entry name" value="HEAT_2"/>
    <property type="match status" value="1"/>
</dbReference>
<dbReference type="Pfam" id="PF08712">
    <property type="entry name" value="Nfu_N"/>
    <property type="match status" value="1"/>
</dbReference>
<dbReference type="Pfam" id="PF13769">
    <property type="entry name" value="Virulence_fact"/>
    <property type="match status" value="1"/>
</dbReference>
<dbReference type="SMART" id="SM00567">
    <property type="entry name" value="EZ_HEAT"/>
    <property type="match status" value="3"/>
</dbReference>
<dbReference type="SMART" id="SM00932">
    <property type="entry name" value="Nfu_N"/>
    <property type="match status" value="1"/>
</dbReference>
<dbReference type="SUPFAM" id="SSF48371">
    <property type="entry name" value="ARM repeat"/>
    <property type="match status" value="1"/>
</dbReference>
<dbReference type="SUPFAM" id="SSF110836">
    <property type="entry name" value="Hypothetical protein SAV1430"/>
    <property type="match status" value="1"/>
</dbReference>
<keyword id="KW-1185">Reference proteome</keyword>
<feature type="chain" id="PRO_0000282312" description="Conserved virulence factor C">
    <location>
        <begin position="1"/>
        <end position="372"/>
    </location>
</feature>
<organism>
    <name type="scientific">Staphylococcus saprophyticus subsp. saprophyticus (strain ATCC 15305 / DSM 20229 / NCIMB 8711 / NCTC 7292 / S-41)</name>
    <dbReference type="NCBI Taxonomy" id="342451"/>
    <lineage>
        <taxon>Bacteria</taxon>
        <taxon>Bacillati</taxon>
        <taxon>Bacillota</taxon>
        <taxon>Bacilli</taxon>
        <taxon>Bacillales</taxon>
        <taxon>Staphylococcaceae</taxon>
        <taxon>Staphylococcus</taxon>
    </lineage>
</organism>
<reference key="1">
    <citation type="journal article" date="2005" name="Proc. Natl. Acad. Sci. U.S.A.">
        <title>Whole genome sequence of Staphylococcus saprophyticus reveals the pathogenesis of uncomplicated urinary tract infection.</title>
        <authorList>
            <person name="Kuroda M."/>
            <person name="Yamashita A."/>
            <person name="Hirakawa H."/>
            <person name="Kumano M."/>
            <person name="Morikawa K."/>
            <person name="Higashide M."/>
            <person name="Maruyama A."/>
            <person name="Inose Y."/>
            <person name="Matoba K."/>
            <person name="Toh H."/>
            <person name="Kuhara S."/>
            <person name="Hattori M."/>
            <person name="Ohta T."/>
        </authorList>
    </citation>
    <scope>NUCLEOTIDE SEQUENCE [LARGE SCALE GENOMIC DNA]</scope>
    <source>
        <strain>ATCC 15305 / DSM 20229 / NCIMB 8711 / NCTC 7292 / S-41</strain>
    </source>
</reference>
<comment type="similarity">
    <text evidence="1">Belongs to the CvfC family.</text>
</comment>
<sequence>MEIVRVEPTPSPNTMKIVLNEKRKDNKSNTYTTILDNQPKFINDVLAVDGVKSIFYVMDFLAVDKKPKYDWEVLLPKVTATLSDESESIDTPAPDEHFGEVKAEVLQFKGIPYQVKLTSSSEEKRKQLPEVYIDSMLAAQKDDDNIVFQRKWENLGIRYGELDDIMSEVTEEILALYPEKDLNHLVENALNTDVVIPEKKYQHVTLETYQATDDWKERLRMLKAFPTPTERDFPLLGDAVSEEEKTPLRREAIVLLGMIEDKAVLPYLFKGLHDKSPAVRRTAGDCLSDLGFKQALPEMEKALDDPHKIVRWRAAMFIFDEGGPEQLDALRTHENDPAYEVKLQIEMAIARIENGDEALGSVWKQIANRNKS</sequence>
<gene>
    <name type="primary">cvfC</name>
    <name type="ordered locus">SSP1310</name>
</gene>
<accession>Q49XP0</accession>
<evidence type="ECO:0000305" key="1"/>
<proteinExistence type="inferred from homology"/>
<protein>
    <recommendedName>
        <fullName>Conserved virulence factor C</fullName>
    </recommendedName>
</protein>
<name>CVFC_STAS1</name>